<accession>Q12T95</accession>
<name>AROE_SHEDO</name>
<comment type="function">
    <text evidence="1">Involved in the biosynthesis of the chorismate, which leads to the biosynthesis of aromatic amino acids. Catalyzes the reversible NADPH linked reduction of 3-dehydroshikimate (DHSA) to yield shikimate (SA).</text>
</comment>
<comment type="catalytic activity">
    <reaction evidence="1">
        <text>shikimate + NADP(+) = 3-dehydroshikimate + NADPH + H(+)</text>
        <dbReference type="Rhea" id="RHEA:17737"/>
        <dbReference type="ChEBI" id="CHEBI:15378"/>
        <dbReference type="ChEBI" id="CHEBI:16630"/>
        <dbReference type="ChEBI" id="CHEBI:36208"/>
        <dbReference type="ChEBI" id="CHEBI:57783"/>
        <dbReference type="ChEBI" id="CHEBI:58349"/>
        <dbReference type="EC" id="1.1.1.25"/>
    </reaction>
</comment>
<comment type="pathway">
    <text evidence="1">Metabolic intermediate biosynthesis; chorismate biosynthesis; chorismate from D-erythrose 4-phosphate and phosphoenolpyruvate: step 4/7.</text>
</comment>
<comment type="subunit">
    <text evidence="1">Homodimer.</text>
</comment>
<comment type="similarity">
    <text evidence="1">Belongs to the shikimate dehydrogenase family.</text>
</comment>
<feature type="chain" id="PRO_0000325164" description="Shikimate dehydrogenase (NADP(+))">
    <location>
        <begin position="1"/>
        <end position="273"/>
    </location>
</feature>
<feature type="active site" description="Proton acceptor" evidence="1">
    <location>
        <position position="66"/>
    </location>
</feature>
<feature type="binding site" evidence="1">
    <location>
        <begin position="15"/>
        <end position="17"/>
    </location>
    <ligand>
        <name>shikimate</name>
        <dbReference type="ChEBI" id="CHEBI:36208"/>
    </ligand>
</feature>
<feature type="binding site" evidence="1">
    <location>
        <position position="62"/>
    </location>
    <ligand>
        <name>shikimate</name>
        <dbReference type="ChEBI" id="CHEBI:36208"/>
    </ligand>
</feature>
<feature type="binding site" evidence="1">
    <location>
        <position position="78"/>
    </location>
    <ligand>
        <name>NADP(+)</name>
        <dbReference type="ChEBI" id="CHEBI:58349"/>
    </ligand>
</feature>
<feature type="binding site" evidence="1">
    <location>
        <position position="87"/>
    </location>
    <ligand>
        <name>shikimate</name>
        <dbReference type="ChEBI" id="CHEBI:36208"/>
    </ligand>
</feature>
<feature type="binding site" evidence="1">
    <location>
        <position position="103"/>
    </location>
    <ligand>
        <name>shikimate</name>
        <dbReference type="ChEBI" id="CHEBI:36208"/>
    </ligand>
</feature>
<feature type="binding site" evidence="1">
    <location>
        <begin position="127"/>
        <end position="131"/>
    </location>
    <ligand>
        <name>NADP(+)</name>
        <dbReference type="ChEBI" id="CHEBI:58349"/>
    </ligand>
</feature>
<feature type="binding site" evidence="1">
    <location>
        <begin position="151"/>
        <end position="156"/>
    </location>
    <ligand>
        <name>NADP(+)</name>
        <dbReference type="ChEBI" id="CHEBI:58349"/>
    </ligand>
</feature>
<feature type="binding site" evidence="1">
    <location>
        <position position="214"/>
    </location>
    <ligand>
        <name>NADP(+)</name>
        <dbReference type="ChEBI" id="CHEBI:58349"/>
    </ligand>
</feature>
<feature type="binding site" evidence="1">
    <location>
        <position position="216"/>
    </location>
    <ligand>
        <name>shikimate</name>
        <dbReference type="ChEBI" id="CHEBI:36208"/>
    </ligand>
</feature>
<feature type="binding site" evidence="1">
    <location>
        <position position="238"/>
    </location>
    <ligand>
        <name>NADP(+)</name>
        <dbReference type="ChEBI" id="CHEBI:58349"/>
    </ligand>
</feature>
<protein>
    <recommendedName>
        <fullName evidence="1">Shikimate dehydrogenase (NADP(+))</fullName>
        <shortName evidence="1">SDH</shortName>
        <ecNumber evidence="1">1.1.1.25</ecNumber>
    </recommendedName>
</protein>
<evidence type="ECO:0000255" key="1">
    <source>
        <dbReference type="HAMAP-Rule" id="MF_00222"/>
    </source>
</evidence>
<organism>
    <name type="scientific">Shewanella denitrificans (strain OS217 / ATCC BAA-1090 / DSM 15013)</name>
    <dbReference type="NCBI Taxonomy" id="318161"/>
    <lineage>
        <taxon>Bacteria</taxon>
        <taxon>Pseudomonadati</taxon>
        <taxon>Pseudomonadota</taxon>
        <taxon>Gammaproteobacteria</taxon>
        <taxon>Alteromonadales</taxon>
        <taxon>Shewanellaceae</taxon>
        <taxon>Shewanella</taxon>
    </lineage>
</organism>
<dbReference type="EC" id="1.1.1.25" evidence="1"/>
<dbReference type="EMBL" id="CP000302">
    <property type="protein sequence ID" value="ABE53331.1"/>
    <property type="molecule type" value="Genomic_DNA"/>
</dbReference>
<dbReference type="RefSeq" id="WP_011494500.1">
    <property type="nucleotide sequence ID" value="NC_007954.1"/>
</dbReference>
<dbReference type="SMR" id="Q12T95"/>
<dbReference type="STRING" id="318161.Sden_0034"/>
<dbReference type="KEGG" id="sdn:Sden_0034"/>
<dbReference type="eggNOG" id="COG0169">
    <property type="taxonomic scope" value="Bacteria"/>
</dbReference>
<dbReference type="HOGENOM" id="CLU_044063_2_1_6"/>
<dbReference type="OrthoDB" id="9776868at2"/>
<dbReference type="UniPathway" id="UPA00053">
    <property type="reaction ID" value="UER00087"/>
</dbReference>
<dbReference type="Proteomes" id="UP000001982">
    <property type="component" value="Chromosome"/>
</dbReference>
<dbReference type="GO" id="GO:0005829">
    <property type="term" value="C:cytosol"/>
    <property type="evidence" value="ECO:0007669"/>
    <property type="project" value="TreeGrafter"/>
</dbReference>
<dbReference type="GO" id="GO:0050661">
    <property type="term" value="F:NADP binding"/>
    <property type="evidence" value="ECO:0007669"/>
    <property type="project" value="InterPro"/>
</dbReference>
<dbReference type="GO" id="GO:0004764">
    <property type="term" value="F:shikimate 3-dehydrogenase (NADP+) activity"/>
    <property type="evidence" value="ECO:0007669"/>
    <property type="project" value="UniProtKB-UniRule"/>
</dbReference>
<dbReference type="GO" id="GO:0008652">
    <property type="term" value="P:amino acid biosynthetic process"/>
    <property type="evidence" value="ECO:0007669"/>
    <property type="project" value="UniProtKB-KW"/>
</dbReference>
<dbReference type="GO" id="GO:0009073">
    <property type="term" value="P:aromatic amino acid family biosynthetic process"/>
    <property type="evidence" value="ECO:0007669"/>
    <property type="project" value="UniProtKB-KW"/>
</dbReference>
<dbReference type="GO" id="GO:0009423">
    <property type="term" value="P:chorismate biosynthetic process"/>
    <property type="evidence" value="ECO:0007669"/>
    <property type="project" value="UniProtKB-UniRule"/>
</dbReference>
<dbReference type="GO" id="GO:0019632">
    <property type="term" value="P:shikimate metabolic process"/>
    <property type="evidence" value="ECO:0007669"/>
    <property type="project" value="InterPro"/>
</dbReference>
<dbReference type="CDD" id="cd01065">
    <property type="entry name" value="NAD_bind_Shikimate_DH"/>
    <property type="match status" value="1"/>
</dbReference>
<dbReference type="FunFam" id="3.40.50.10860:FF:000006">
    <property type="entry name" value="Shikimate dehydrogenase (NADP(+))"/>
    <property type="match status" value="1"/>
</dbReference>
<dbReference type="FunFam" id="3.40.50.720:FF:000104">
    <property type="entry name" value="Shikimate dehydrogenase (NADP(+))"/>
    <property type="match status" value="1"/>
</dbReference>
<dbReference type="Gene3D" id="3.40.50.10860">
    <property type="entry name" value="Leucine Dehydrogenase, chain A, domain 1"/>
    <property type="match status" value="1"/>
</dbReference>
<dbReference type="Gene3D" id="3.40.50.720">
    <property type="entry name" value="NAD(P)-binding Rossmann-like Domain"/>
    <property type="match status" value="1"/>
</dbReference>
<dbReference type="HAMAP" id="MF_00222">
    <property type="entry name" value="Shikimate_DH_AroE"/>
    <property type="match status" value="1"/>
</dbReference>
<dbReference type="InterPro" id="IPR046346">
    <property type="entry name" value="Aminoacid_DH-like_N_sf"/>
</dbReference>
<dbReference type="InterPro" id="IPR036291">
    <property type="entry name" value="NAD(P)-bd_dom_sf"/>
</dbReference>
<dbReference type="InterPro" id="IPR041121">
    <property type="entry name" value="SDH_C"/>
</dbReference>
<dbReference type="InterPro" id="IPR011342">
    <property type="entry name" value="Shikimate_DH"/>
</dbReference>
<dbReference type="InterPro" id="IPR013708">
    <property type="entry name" value="Shikimate_DH-bd_N"/>
</dbReference>
<dbReference type="InterPro" id="IPR022893">
    <property type="entry name" value="Shikimate_DH_fam"/>
</dbReference>
<dbReference type="InterPro" id="IPR006151">
    <property type="entry name" value="Shikm_DH/Glu-tRNA_Rdtase"/>
</dbReference>
<dbReference type="NCBIfam" id="TIGR00507">
    <property type="entry name" value="aroE"/>
    <property type="match status" value="1"/>
</dbReference>
<dbReference type="NCBIfam" id="NF001310">
    <property type="entry name" value="PRK00258.1-2"/>
    <property type="match status" value="1"/>
</dbReference>
<dbReference type="PANTHER" id="PTHR21089:SF1">
    <property type="entry name" value="BIFUNCTIONAL 3-DEHYDROQUINATE DEHYDRATASE_SHIKIMATE DEHYDROGENASE, CHLOROPLASTIC"/>
    <property type="match status" value="1"/>
</dbReference>
<dbReference type="PANTHER" id="PTHR21089">
    <property type="entry name" value="SHIKIMATE DEHYDROGENASE"/>
    <property type="match status" value="1"/>
</dbReference>
<dbReference type="Pfam" id="PF18317">
    <property type="entry name" value="SDH_C"/>
    <property type="match status" value="1"/>
</dbReference>
<dbReference type="Pfam" id="PF01488">
    <property type="entry name" value="Shikimate_DH"/>
    <property type="match status" value="1"/>
</dbReference>
<dbReference type="Pfam" id="PF08501">
    <property type="entry name" value="Shikimate_dh_N"/>
    <property type="match status" value="1"/>
</dbReference>
<dbReference type="SUPFAM" id="SSF53223">
    <property type="entry name" value="Aminoacid dehydrogenase-like, N-terminal domain"/>
    <property type="match status" value="1"/>
</dbReference>
<dbReference type="SUPFAM" id="SSF51735">
    <property type="entry name" value="NAD(P)-binding Rossmann-fold domains"/>
    <property type="match status" value="1"/>
</dbReference>
<keyword id="KW-0028">Amino-acid biosynthesis</keyword>
<keyword id="KW-0057">Aromatic amino acid biosynthesis</keyword>
<keyword id="KW-0521">NADP</keyword>
<keyword id="KW-0560">Oxidoreductase</keyword>
<keyword id="KW-1185">Reference proteome</keyword>
<proteinExistence type="inferred from homology"/>
<sequence length="273" mass="29152">MTDKYAVFGNPIAQSKSPMIHTEFAKQTQQNMSYSAVLAPVEGFAASIKSFFASGGRGANVTAPFKEQAFSLCDELSELAQLAGAVNTLVRLEDGRLRGDNTDGLGLVADIERRLTSLKDKRVLLVGAGGAARGCILPLLQAGVAQLDITNRTHDKALQLAQLFSRYGNIKALTLTELASGYDVIINSSSAGLTGQLISLPSTIIDGTTYCYDMSYGSDTTLFNQWALSAGACHCCDGLGMLVGQAAQSFYLWRNVHPDATTVMQQLRDALGR</sequence>
<gene>
    <name evidence="1" type="primary">aroE</name>
    <name type="ordered locus">Sden_0034</name>
</gene>
<reference key="1">
    <citation type="submission" date="2006-03" db="EMBL/GenBank/DDBJ databases">
        <title>Complete sequence of Shewanella denitrificans OS217.</title>
        <authorList>
            <consortium name="US DOE Joint Genome Institute"/>
            <person name="Copeland A."/>
            <person name="Lucas S."/>
            <person name="Lapidus A."/>
            <person name="Barry K."/>
            <person name="Detter J.C."/>
            <person name="Glavina del Rio T."/>
            <person name="Hammon N."/>
            <person name="Israni S."/>
            <person name="Dalin E."/>
            <person name="Tice H."/>
            <person name="Pitluck S."/>
            <person name="Brettin T."/>
            <person name="Bruce D."/>
            <person name="Han C."/>
            <person name="Tapia R."/>
            <person name="Gilna P."/>
            <person name="Kiss H."/>
            <person name="Schmutz J."/>
            <person name="Larimer F."/>
            <person name="Land M."/>
            <person name="Hauser L."/>
            <person name="Kyrpides N."/>
            <person name="Lykidis A."/>
            <person name="Richardson P."/>
        </authorList>
    </citation>
    <scope>NUCLEOTIDE SEQUENCE [LARGE SCALE GENOMIC DNA]</scope>
    <source>
        <strain>OS217 / ATCC BAA-1090 / DSM 15013</strain>
    </source>
</reference>